<proteinExistence type="inferred from homology"/>
<protein>
    <recommendedName>
        <fullName evidence="1">Acetyl-coenzyme A carboxylase carboxyl transferase subunit alpha</fullName>
        <shortName evidence="1">ACCase subunit alpha</shortName>
        <shortName evidence="1">Acetyl-CoA carboxylase carboxyltransferase subunit alpha</shortName>
        <ecNumber evidence="1">2.1.3.15</ecNumber>
    </recommendedName>
</protein>
<organism>
    <name type="scientific">Streptococcus pyogenes serotype M4 (strain MGAS10750)</name>
    <dbReference type="NCBI Taxonomy" id="370554"/>
    <lineage>
        <taxon>Bacteria</taxon>
        <taxon>Bacillati</taxon>
        <taxon>Bacillota</taxon>
        <taxon>Bacilli</taxon>
        <taxon>Lactobacillales</taxon>
        <taxon>Streptococcaceae</taxon>
        <taxon>Streptococcus</taxon>
    </lineage>
</organism>
<comment type="function">
    <text evidence="1">Component of the acetyl coenzyme A carboxylase (ACC) complex. First, biotin carboxylase catalyzes the carboxylation of biotin on its carrier protein (BCCP) and then the CO(2) group is transferred by the carboxyltransferase to acetyl-CoA to form malonyl-CoA.</text>
</comment>
<comment type="catalytic activity">
    <reaction evidence="1">
        <text>N(6)-carboxybiotinyl-L-lysyl-[protein] + acetyl-CoA = N(6)-biotinyl-L-lysyl-[protein] + malonyl-CoA</text>
        <dbReference type="Rhea" id="RHEA:54728"/>
        <dbReference type="Rhea" id="RHEA-COMP:10505"/>
        <dbReference type="Rhea" id="RHEA-COMP:10506"/>
        <dbReference type="ChEBI" id="CHEBI:57288"/>
        <dbReference type="ChEBI" id="CHEBI:57384"/>
        <dbReference type="ChEBI" id="CHEBI:83144"/>
        <dbReference type="ChEBI" id="CHEBI:83145"/>
        <dbReference type="EC" id="2.1.3.15"/>
    </reaction>
</comment>
<comment type="pathway">
    <text evidence="1">Lipid metabolism; malonyl-CoA biosynthesis; malonyl-CoA from acetyl-CoA: step 1/1.</text>
</comment>
<comment type="subunit">
    <text evidence="1">Acetyl-CoA carboxylase is a heterohexamer composed of biotin carboxyl carrier protein (AccB), biotin carboxylase (AccC) and two subunits each of ACCase subunit alpha (AccA) and ACCase subunit beta (AccD).</text>
</comment>
<comment type="subcellular location">
    <subcellularLocation>
        <location evidence="1">Cytoplasm</location>
    </subcellularLocation>
</comment>
<comment type="similarity">
    <text evidence="1">Belongs to the AccA family.</text>
</comment>
<sequence>MTDVSRVLKEARDQGRLTTLDYANLIFDDFMELHGDRHFSDDGAIVGGLAYLAGQPVTVIGIQKGKNLQDNLARNFGQPNPEGYRKALRLMKQAEKFGRPVVTFINTAGAYPGVGAEERGQGEAIAKNLMEMSDLKVPIIAIIIGEGGSGGALALAVADQVWMLENTMYAVLSPEGFASILWKDGSRATEAAELMKITAGELYQMGIVDRIIPEHGYFSSEIVDIIKANLIEQITSLQAKPLDQLLDERYQRFRKY</sequence>
<feature type="chain" id="PRO_1000062685" description="Acetyl-coenzyme A carboxylase carboxyl transferase subunit alpha">
    <location>
        <begin position="1"/>
        <end position="256"/>
    </location>
</feature>
<feature type="domain" description="CoA carboxyltransferase C-terminal" evidence="2">
    <location>
        <begin position="1"/>
        <end position="236"/>
    </location>
</feature>
<dbReference type="EC" id="2.1.3.15" evidence="1"/>
<dbReference type="EMBL" id="CP000262">
    <property type="protein sequence ID" value="ABF38493.1"/>
    <property type="molecule type" value="Genomic_DNA"/>
</dbReference>
<dbReference type="SMR" id="Q1J593"/>
<dbReference type="KEGG" id="spi:MGAS10750_Spy1543"/>
<dbReference type="HOGENOM" id="CLU_015486_0_2_9"/>
<dbReference type="UniPathway" id="UPA00655">
    <property type="reaction ID" value="UER00711"/>
</dbReference>
<dbReference type="Proteomes" id="UP000002434">
    <property type="component" value="Chromosome"/>
</dbReference>
<dbReference type="GO" id="GO:0009317">
    <property type="term" value="C:acetyl-CoA carboxylase complex"/>
    <property type="evidence" value="ECO:0007669"/>
    <property type="project" value="InterPro"/>
</dbReference>
<dbReference type="GO" id="GO:0003989">
    <property type="term" value="F:acetyl-CoA carboxylase activity"/>
    <property type="evidence" value="ECO:0007669"/>
    <property type="project" value="InterPro"/>
</dbReference>
<dbReference type="GO" id="GO:0005524">
    <property type="term" value="F:ATP binding"/>
    <property type="evidence" value="ECO:0007669"/>
    <property type="project" value="UniProtKB-KW"/>
</dbReference>
<dbReference type="GO" id="GO:0016743">
    <property type="term" value="F:carboxyl- or carbamoyltransferase activity"/>
    <property type="evidence" value="ECO:0007669"/>
    <property type="project" value="UniProtKB-UniRule"/>
</dbReference>
<dbReference type="GO" id="GO:0006633">
    <property type="term" value="P:fatty acid biosynthetic process"/>
    <property type="evidence" value="ECO:0007669"/>
    <property type="project" value="UniProtKB-KW"/>
</dbReference>
<dbReference type="GO" id="GO:2001295">
    <property type="term" value="P:malonyl-CoA biosynthetic process"/>
    <property type="evidence" value="ECO:0007669"/>
    <property type="project" value="UniProtKB-UniRule"/>
</dbReference>
<dbReference type="Gene3D" id="3.90.226.10">
    <property type="entry name" value="2-enoyl-CoA Hydratase, Chain A, domain 1"/>
    <property type="match status" value="1"/>
</dbReference>
<dbReference type="HAMAP" id="MF_00823">
    <property type="entry name" value="AcetylCoA_CT_alpha"/>
    <property type="match status" value="1"/>
</dbReference>
<dbReference type="InterPro" id="IPR001095">
    <property type="entry name" value="Acetyl_CoA_COase_a_su"/>
</dbReference>
<dbReference type="InterPro" id="IPR029045">
    <property type="entry name" value="ClpP/crotonase-like_dom_sf"/>
</dbReference>
<dbReference type="InterPro" id="IPR011763">
    <property type="entry name" value="COA_CT_C"/>
</dbReference>
<dbReference type="NCBIfam" id="TIGR00513">
    <property type="entry name" value="accA"/>
    <property type="match status" value="1"/>
</dbReference>
<dbReference type="NCBIfam" id="NF041504">
    <property type="entry name" value="AccA_sub"/>
    <property type="match status" value="1"/>
</dbReference>
<dbReference type="NCBIfam" id="NF004344">
    <property type="entry name" value="PRK05724.1"/>
    <property type="match status" value="1"/>
</dbReference>
<dbReference type="NCBIfam" id="NF008971">
    <property type="entry name" value="PRK12319.1"/>
    <property type="match status" value="1"/>
</dbReference>
<dbReference type="PANTHER" id="PTHR42853">
    <property type="entry name" value="ACETYL-COENZYME A CARBOXYLASE CARBOXYL TRANSFERASE SUBUNIT ALPHA"/>
    <property type="match status" value="1"/>
</dbReference>
<dbReference type="PANTHER" id="PTHR42853:SF3">
    <property type="entry name" value="ACETYL-COENZYME A CARBOXYLASE CARBOXYL TRANSFERASE SUBUNIT ALPHA, CHLOROPLASTIC"/>
    <property type="match status" value="1"/>
</dbReference>
<dbReference type="Pfam" id="PF03255">
    <property type="entry name" value="ACCA"/>
    <property type="match status" value="1"/>
</dbReference>
<dbReference type="PRINTS" id="PR01069">
    <property type="entry name" value="ACCCTRFRASEA"/>
</dbReference>
<dbReference type="SUPFAM" id="SSF52096">
    <property type="entry name" value="ClpP/crotonase"/>
    <property type="match status" value="1"/>
</dbReference>
<dbReference type="PROSITE" id="PS50989">
    <property type="entry name" value="COA_CT_CTER"/>
    <property type="match status" value="1"/>
</dbReference>
<evidence type="ECO:0000255" key="1">
    <source>
        <dbReference type="HAMAP-Rule" id="MF_00823"/>
    </source>
</evidence>
<evidence type="ECO:0000255" key="2">
    <source>
        <dbReference type="PROSITE-ProRule" id="PRU01137"/>
    </source>
</evidence>
<keyword id="KW-0067">ATP-binding</keyword>
<keyword id="KW-0963">Cytoplasm</keyword>
<keyword id="KW-0275">Fatty acid biosynthesis</keyword>
<keyword id="KW-0276">Fatty acid metabolism</keyword>
<keyword id="KW-0444">Lipid biosynthesis</keyword>
<keyword id="KW-0443">Lipid metabolism</keyword>
<keyword id="KW-0547">Nucleotide-binding</keyword>
<keyword id="KW-0808">Transferase</keyword>
<accession>Q1J593</accession>
<name>ACCA_STRPF</name>
<gene>
    <name evidence="1" type="primary">accA</name>
    <name type="ordered locus">MGAS10750_Spy1543</name>
</gene>
<reference key="1">
    <citation type="journal article" date="2006" name="Proc. Natl. Acad. Sci. U.S.A.">
        <title>Molecular genetic anatomy of inter- and intraserotype variation in the human bacterial pathogen group A Streptococcus.</title>
        <authorList>
            <person name="Beres S.B."/>
            <person name="Richter E.W."/>
            <person name="Nagiec M.J."/>
            <person name="Sumby P."/>
            <person name="Porcella S.F."/>
            <person name="DeLeo F.R."/>
            <person name="Musser J.M."/>
        </authorList>
    </citation>
    <scope>NUCLEOTIDE SEQUENCE [LARGE SCALE GENOMIC DNA]</scope>
    <source>
        <strain>MGAS10750</strain>
    </source>
</reference>